<feature type="chain" id="PRO_1000135040" description="RNA-binding protein Hfq">
    <location>
        <begin position="1"/>
        <end position="80"/>
    </location>
</feature>
<feature type="domain" description="Sm" evidence="2">
    <location>
        <begin position="10"/>
        <end position="70"/>
    </location>
</feature>
<sequence>MAERSQNLQDLFLNTVRKQKISLTIFLINGVKLTGVVTSFDNFCVLLRRDGHSQLVYKHAISTIMPGQPLQMFENEEAAS</sequence>
<reference key="1">
    <citation type="journal article" date="2009" name="Appl. Environ. Microbiol.">
        <title>Rhizobium sp. strain NGR234 possesses a remarkable number of secretion systems.</title>
        <authorList>
            <person name="Schmeisser C."/>
            <person name="Liesegang H."/>
            <person name="Krysciak D."/>
            <person name="Bakkou N."/>
            <person name="Le Quere A."/>
            <person name="Wollherr A."/>
            <person name="Heinemeyer I."/>
            <person name="Morgenstern B."/>
            <person name="Pommerening-Roeser A."/>
            <person name="Flores M."/>
            <person name="Palacios R."/>
            <person name="Brenner S."/>
            <person name="Gottschalk G."/>
            <person name="Schmitz R.A."/>
            <person name="Broughton W.J."/>
            <person name="Perret X."/>
            <person name="Strittmatter A.W."/>
            <person name="Streit W.R."/>
        </authorList>
    </citation>
    <scope>NUCLEOTIDE SEQUENCE [LARGE SCALE GENOMIC DNA]</scope>
    <source>
        <strain>NBRC 101917 / NGR234</strain>
    </source>
</reference>
<protein>
    <recommendedName>
        <fullName evidence="1">RNA-binding protein Hfq</fullName>
    </recommendedName>
</protein>
<proteinExistence type="inferred from homology"/>
<dbReference type="EMBL" id="CP001389">
    <property type="protein sequence ID" value="ACP25082.1"/>
    <property type="molecule type" value="Genomic_DNA"/>
</dbReference>
<dbReference type="RefSeq" id="WP_003535434.1">
    <property type="nucleotide sequence ID" value="NC_012587.1"/>
</dbReference>
<dbReference type="RefSeq" id="YP_002825835.1">
    <property type="nucleotide sequence ID" value="NC_012587.1"/>
</dbReference>
<dbReference type="SMR" id="C3MBM0"/>
<dbReference type="STRING" id="394.NGR_c13010"/>
<dbReference type="GeneID" id="89575788"/>
<dbReference type="KEGG" id="rhi:NGR_c13010"/>
<dbReference type="PATRIC" id="fig|394.7.peg.4123"/>
<dbReference type="eggNOG" id="COG1923">
    <property type="taxonomic scope" value="Bacteria"/>
</dbReference>
<dbReference type="HOGENOM" id="CLU_113688_0_0_5"/>
<dbReference type="OrthoDB" id="9799751at2"/>
<dbReference type="PRO" id="PR:C3MBM0"/>
<dbReference type="Proteomes" id="UP000001054">
    <property type="component" value="Chromosome"/>
</dbReference>
<dbReference type="GO" id="GO:0005829">
    <property type="term" value="C:cytosol"/>
    <property type="evidence" value="ECO:0007669"/>
    <property type="project" value="TreeGrafter"/>
</dbReference>
<dbReference type="GO" id="GO:0003723">
    <property type="term" value="F:RNA binding"/>
    <property type="evidence" value="ECO:0007669"/>
    <property type="project" value="UniProtKB-UniRule"/>
</dbReference>
<dbReference type="GO" id="GO:0006355">
    <property type="term" value="P:regulation of DNA-templated transcription"/>
    <property type="evidence" value="ECO:0007669"/>
    <property type="project" value="InterPro"/>
</dbReference>
<dbReference type="GO" id="GO:0043487">
    <property type="term" value="P:regulation of RNA stability"/>
    <property type="evidence" value="ECO:0007669"/>
    <property type="project" value="TreeGrafter"/>
</dbReference>
<dbReference type="GO" id="GO:0045974">
    <property type="term" value="P:regulation of translation, ncRNA-mediated"/>
    <property type="evidence" value="ECO:0007669"/>
    <property type="project" value="TreeGrafter"/>
</dbReference>
<dbReference type="CDD" id="cd01716">
    <property type="entry name" value="Hfq"/>
    <property type="match status" value="1"/>
</dbReference>
<dbReference type="Gene3D" id="2.30.30.100">
    <property type="match status" value="1"/>
</dbReference>
<dbReference type="HAMAP" id="MF_00436">
    <property type="entry name" value="Hfq"/>
    <property type="match status" value="1"/>
</dbReference>
<dbReference type="InterPro" id="IPR005001">
    <property type="entry name" value="Hfq"/>
</dbReference>
<dbReference type="InterPro" id="IPR010920">
    <property type="entry name" value="LSM_dom_sf"/>
</dbReference>
<dbReference type="InterPro" id="IPR047575">
    <property type="entry name" value="Sm"/>
</dbReference>
<dbReference type="NCBIfam" id="TIGR02383">
    <property type="entry name" value="Hfq"/>
    <property type="match status" value="1"/>
</dbReference>
<dbReference type="NCBIfam" id="NF001602">
    <property type="entry name" value="PRK00395.1"/>
    <property type="match status" value="1"/>
</dbReference>
<dbReference type="PANTHER" id="PTHR34772">
    <property type="entry name" value="RNA-BINDING PROTEIN HFQ"/>
    <property type="match status" value="1"/>
</dbReference>
<dbReference type="PANTHER" id="PTHR34772:SF1">
    <property type="entry name" value="RNA-BINDING PROTEIN HFQ"/>
    <property type="match status" value="1"/>
</dbReference>
<dbReference type="Pfam" id="PF17209">
    <property type="entry name" value="Hfq"/>
    <property type="match status" value="1"/>
</dbReference>
<dbReference type="SUPFAM" id="SSF50182">
    <property type="entry name" value="Sm-like ribonucleoproteins"/>
    <property type="match status" value="1"/>
</dbReference>
<dbReference type="PROSITE" id="PS52002">
    <property type="entry name" value="SM"/>
    <property type="match status" value="1"/>
</dbReference>
<keyword id="KW-1185">Reference proteome</keyword>
<keyword id="KW-0694">RNA-binding</keyword>
<keyword id="KW-0346">Stress response</keyword>
<gene>
    <name evidence="1" type="primary">hfq</name>
    <name type="ordered locus">NGR_c13010</name>
</gene>
<name>HFQ_SINFN</name>
<evidence type="ECO:0000255" key="1">
    <source>
        <dbReference type="HAMAP-Rule" id="MF_00436"/>
    </source>
</evidence>
<evidence type="ECO:0000255" key="2">
    <source>
        <dbReference type="PROSITE-ProRule" id="PRU01346"/>
    </source>
</evidence>
<organism>
    <name type="scientific">Sinorhizobium fredii (strain NBRC 101917 / NGR234)</name>
    <dbReference type="NCBI Taxonomy" id="394"/>
    <lineage>
        <taxon>Bacteria</taxon>
        <taxon>Pseudomonadati</taxon>
        <taxon>Pseudomonadota</taxon>
        <taxon>Alphaproteobacteria</taxon>
        <taxon>Hyphomicrobiales</taxon>
        <taxon>Rhizobiaceae</taxon>
        <taxon>Sinorhizobium/Ensifer group</taxon>
        <taxon>Sinorhizobium</taxon>
    </lineage>
</organism>
<accession>C3MBM0</accession>
<comment type="function">
    <text evidence="1">RNA chaperone that binds small regulatory RNA (sRNAs) and mRNAs to facilitate mRNA translational regulation in response to envelope stress, environmental stress and changes in metabolite concentrations. Also binds with high specificity to tRNAs.</text>
</comment>
<comment type="subunit">
    <text evidence="1">Homohexamer.</text>
</comment>
<comment type="similarity">
    <text evidence="1">Belongs to the Hfq family.</text>
</comment>